<evidence type="ECO:0000250" key="1">
    <source>
        <dbReference type="UniProtKB" id="P9WPI9"/>
    </source>
</evidence>
<evidence type="ECO:0000256" key="2">
    <source>
        <dbReference type="SAM" id="MobiDB-lite"/>
    </source>
</evidence>
<evidence type="ECO:0000305" key="3"/>
<protein>
    <recommendedName>
        <fullName evidence="1">Tyrosine-protein kinase PtkA</fullName>
        <ecNumber evidence="1">2.7.10.-</ecNumber>
    </recommendedName>
    <alternativeName>
        <fullName evidence="1">Protein tyrosine kinase A</fullName>
    </alternativeName>
</protein>
<organism>
    <name type="scientific">Mycobacterium bovis (strain ATCC BAA-935 / AF2122/97)</name>
    <dbReference type="NCBI Taxonomy" id="233413"/>
    <lineage>
        <taxon>Bacteria</taxon>
        <taxon>Bacillati</taxon>
        <taxon>Actinomycetota</taxon>
        <taxon>Actinomycetes</taxon>
        <taxon>Mycobacteriales</taxon>
        <taxon>Mycobacteriaceae</taxon>
        <taxon>Mycobacterium</taxon>
        <taxon>Mycobacterium tuberculosis complex</taxon>
    </lineage>
</organism>
<name>PTKA_MYCBO</name>
<accession>P68910</accession>
<accession>A0A1R3Y0Z6</accession>
<accession>Q10515</accession>
<accession>Q10516</accession>
<accession>X2BKI8</accession>
<gene>
    <name evidence="1" type="primary">ptkA</name>
    <name type="ordered locus">BQ2027_MB2257</name>
</gene>
<keyword id="KW-0067">ATP-binding</keyword>
<keyword id="KW-0418">Kinase</keyword>
<keyword id="KW-0547">Nucleotide-binding</keyword>
<keyword id="KW-0597">Phosphoprotein</keyword>
<keyword id="KW-1185">Reference proteome</keyword>
<keyword id="KW-0808">Transferase</keyword>
<keyword id="KW-0829">Tyrosine-protein kinase</keyword>
<keyword id="KW-0843">Virulence</keyword>
<sequence>MSSPRERRPASQAPRLSRRPPAHQTSRSSPDTTAPTGSGLSNRFVNDNGIVTDTTASGTNCPPPPRAAARRASSPGESPQLVIFDLDGTLTDSARGIVSSFRHALNHIGAPVPEGDLATHIVGPPMHETLRAMGLGESAEEAIVAYRADYSARGWAMNSLFDGIGPLLADLRTAGVRLAVATSKAEPTARRILRHFGIEQHFEVIAGASTDGSRGSKVDVLAHALAQLRPLPERLVMVGDRSHDVDGAAAHGIDTVVVGWGYGRADFIDKTSTTVVTHAATIDELREALGV</sequence>
<comment type="function">
    <text evidence="1">Required for growth within macrophages. Catalyzes the phosphorylation of PtpA on the tyrosine residues at positions 128 and 129, thereby increasing PtpA phosphatase activity and promoting pathogenicity.</text>
</comment>
<comment type="catalytic activity">
    <reaction evidence="1">
        <text>L-tyrosyl-[protein] + ATP = O-phospho-L-tyrosyl-[protein] + ADP + H(+)</text>
        <dbReference type="Rhea" id="RHEA:10596"/>
        <dbReference type="Rhea" id="RHEA-COMP:10136"/>
        <dbReference type="Rhea" id="RHEA-COMP:20101"/>
        <dbReference type="ChEBI" id="CHEBI:15378"/>
        <dbReference type="ChEBI" id="CHEBI:30616"/>
        <dbReference type="ChEBI" id="CHEBI:46858"/>
        <dbReference type="ChEBI" id="CHEBI:61978"/>
        <dbReference type="ChEBI" id="CHEBI:456216"/>
    </reaction>
    <physiologicalReaction direction="left-to-right" evidence="1">
        <dbReference type="Rhea" id="RHEA:10597"/>
    </physiologicalReaction>
</comment>
<comment type="subunit">
    <text evidence="1">Interacts with PtpA.</text>
</comment>
<comment type="PTM">
    <text evidence="1">Autophosphorylated.</text>
</comment>
<comment type="similarity">
    <text evidence="3">Belongs to the HAD-like hydrolase superfamily. CbbY/CbbZ/Gph/YieH family.</text>
</comment>
<proteinExistence type="inferred from homology"/>
<feature type="chain" id="PRO_0000108065" description="Tyrosine-protein kinase PtkA">
    <location>
        <begin position="1"/>
        <end position="291"/>
    </location>
</feature>
<feature type="region of interest" description="Disordered" evidence="2">
    <location>
        <begin position="1"/>
        <end position="79"/>
    </location>
</feature>
<feature type="compositionally biased region" description="Polar residues" evidence="2">
    <location>
        <begin position="23"/>
        <end position="60"/>
    </location>
</feature>
<feature type="modified residue" description="Phosphotyrosine" evidence="1">
    <location>
        <position position="262"/>
    </location>
</feature>
<reference key="1">
    <citation type="journal article" date="2003" name="Proc. Natl. Acad. Sci. U.S.A.">
        <title>The complete genome sequence of Mycobacterium bovis.</title>
        <authorList>
            <person name="Garnier T."/>
            <person name="Eiglmeier K."/>
            <person name="Camus J.-C."/>
            <person name="Medina N."/>
            <person name="Mansoor H."/>
            <person name="Pryor M."/>
            <person name="Duthoy S."/>
            <person name="Grondin S."/>
            <person name="Lacroix C."/>
            <person name="Monsempe C."/>
            <person name="Simon S."/>
            <person name="Harris B."/>
            <person name="Atkin R."/>
            <person name="Doggett J."/>
            <person name="Mayes R."/>
            <person name="Keating L."/>
            <person name="Wheeler P.R."/>
            <person name="Parkhill J."/>
            <person name="Barrell B.G."/>
            <person name="Cole S.T."/>
            <person name="Gordon S.V."/>
            <person name="Hewinson R.G."/>
        </authorList>
    </citation>
    <scope>NUCLEOTIDE SEQUENCE [LARGE SCALE GENOMIC DNA]</scope>
    <source>
        <strain>ATCC BAA-935 / AF2122/97</strain>
    </source>
</reference>
<reference key="2">
    <citation type="journal article" date="2017" name="Genome Announc.">
        <title>Updated reference genome sequence and annotation of Mycobacterium bovis AF2122/97.</title>
        <authorList>
            <person name="Malone K.M."/>
            <person name="Farrell D."/>
            <person name="Stuber T.P."/>
            <person name="Schubert O.T."/>
            <person name="Aebersold R."/>
            <person name="Robbe-Austerman S."/>
            <person name="Gordon S.V."/>
        </authorList>
    </citation>
    <scope>NUCLEOTIDE SEQUENCE [LARGE SCALE GENOMIC DNA]</scope>
    <scope>GENOME REANNOTATION</scope>
    <source>
        <strain>ATCC BAA-935 / AF2122/97</strain>
    </source>
</reference>
<dbReference type="EC" id="2.7.10.-" evidence="1"/>
<dbReference type="EMBL" id="LT708304">
    <property type="protein sequence ID" value="SIU00867.1"/>
    <property type="molecule type" value="Genomic_DNA"/>
</dbReference>
<dbReference type="RefSeq" id="NP_855906.1">
    <property type="nucleotide sequence ID" value="NC_002945.3"/>
</dbReference>
<dbReference type="SMR" id="P68910"/>
<dbReference type="KEGG" id="mbo:BQ2027_MB2257"/>
<dbReference type="PATRIC" id="fig|233413.5.peg.2477"/>
<dbReference type="Proteomes" id="UP000001419">
    <property type="component" value="Chromosome"/>
</dbReference>
<dbReference type="GO" id="GO:0005829">
    <property type="term" value="C:cytosol"/>
    <property type="evidence" value="ECO:0007669"/>
    <property type="project" value="TreeGrafter"/>
</dbReference>
<dbReference type="GO" id="GO:0005524">
    <property type="term" value="F:ATP binding"/>
    <property type="evidence" value="ECO:0007669"/>
    <property type="project" value="UniProtKB-KW"/>
</dbReference>
<dbReference type="GO" id="GO:0004713">
    <property type="term" value="F:protein tyrosine kinase activity"/>
    <property type="evidence" value="ECO:0007669"/>
    <property type="project" value="UniProtKB-KW"/>
</dbReference>
<dbReference type="CDD" id="cd04302">
    <property type="entry name" value="HAD_5NT"/>
    <property type="match status" value="1"/>
</dbReference>
<dbReference type="FunFam" id="3.40.50.1000:FF:000022">
    <property type="entry name" value="Phosphoglycolate phosphatase"/>
    <property type="match status" value="1"/>
</dbReference>
<dbReference type="Gene3D" id="3.40.50.1000">
    <property type="entry name" value="HAD superfamily/HAD-like"/>
    <property type="match status" value="1"/>
</dbReference>
<dbReference type="Gene3D" id="1.10.150.240">
    <property type="entry name" value="Putative phosphatase, domain 2"/>
    <property type="match status" value="1"/>
</dbReference>
<dbReference type="InterPro" id="IPR050155">
    <property type="entry name" value="HAD-like_hydrolase_sf"/>
</dbReference>
<dbReference type="InterPro" id="IPR036412">
    <property type="entry name" value="HAD-like_sf"/>
</dbReference>
<dbReference type="InterPro" id="IPR041492">
    <property type="entry name" value="HAD_2"/>
</dbReference>
<dbReference type="InterPro" id="IPR023214">
    <property type="entry name" value="HAD_sf"/>
</dbReference>
<dbReference type="InterPro" id="IPR023198">
    <property type="entry name" value="PGP-like_dom2"/>
</dbReference>
<dbReference type="PANTHER" id="PTHR43434:SF20">
    <property type="entry name" value="5'-NUCLEOTIDASE"/>
    <property type="match status" value="1"/>
</dbReference>
<dbReference type="PANTHER" id="PTHR43434">
    <property type="entry name" value="PHOSPHOGLYCOLATE PHOSPHATASE"/>
    <property type="match status" value="1"/>
</dbReference>
<dbReference type="Pfam" id="PF13419">
    <property type="entry name" value="HAD_2"/>
    <property type="match status" value="1"/>
</dbReference>
<dbReference type="SFLD" id="SFLDG01129">
    <property type="entry name" value="C1.5:_HAD__Beta-PGM__Phosphata"/>
    <property type="match status" value="1"/>
</dbReference>
<dbReference type="SFLD" id="SFLDS00003">
    <property type="entry name" value="Haloacid_Dehalogenase"/>
    <property type="match status" value="1"/>
</dbReference>
<dbReference type="SUPFAM" id="SSF56784">
    <property type="entry name" value="HAD-like"/>
    <property type="match status" value="1"/>
</dbReference>